<organism>
    <name type="scientific">Caenorhabditis elegans</name>
    <dbReference type="NCBI Taxonomy" id="6239"/>
    <lineage>
        <taxon>Eukaryota</taxon>
        <taxon>Metazoa</taxon>
        <taxon>Ecdysozoa</taxon>
        <taxon>Nematoda</taxon>
        <taxon>Chromadorea</taxon>
        <taxon>Rhabditida</taxon>
        <taxon>Rhabditina</taxon>
        <taxon>Rhabditomorpha</taxon>
        <taxon>Rhabditoidea</taxon>
        <taxon>Rhabditidae</taxon>
        <taxon>Peloderinae</taxon>
        <taxon>Caenorhabditis</taxon>
    </lineage>
</organism>
<name>RHOM2_CAEEL</name>
<proteinExistence type="inferred from homology"/>
<protein>
    <recommendedName>
        <fullName evidence="5">Inactive rhomboid-related protein 2</fullName>
    </recommendedName>
</protein>
<dbReference type="EMBL" id="BX284603">
    <property type="protein sequence ID" value="CAA82377.3"/>
    <property type="molecule type" value="Genomic_DNA"/>
</dbReference>
<dbReference type="PIR" id="S40723">
    <property type="entry name" value="S40723"/>
</dbReference>
<dbReference type="RefSeq" id="NP_001366679.1">
    <property type="nucleotide sequence ID" value="NM_001379864.2"/>
</dbReference>
<dbReference type="RefSeq" id="NP_499120.2">
    <property type="nucleotide sequence ID" value="NM_066719.2"/>
</dbReference>
<dbReference type="STRING" id="6239.C48B4.2.1"/>
<dbReference type="PaxDb" id="6239-C48B4.2"/>
<dbReference type="EnsemblMetazoa" id="C48B4.2.1">
    <property type="protein sequence ID" value="C48B4.2.1"/>
    <property type="gene ID" value="WBGene00004401"/>
</dbReference>
<dbReference type="GeneID" id="183564"/>
<dbReference type="UCSC" id="C48B4.2">
    <property type="organism name" value="c. elegans"/>
</dbReference>
<dbReference type="AGR" id="WB:WBGene00004401"/>
<dbReference type="WormBase" id="C48B4.2">
    <property type="protein sequence ID" value="CE54108"/>
    <property type="gene ID" value="WBGene00004401"/>
    <property type="gene designation" value="rom-2"/>
</dbReference>
<dbReference type="eggNOG" id="KOG2289">
    <property type="taxonomic scope" value="Eukaryota"/>
</dbReference>
<dbReference type="GeneTree" id="ENSGT00940000166075"/>
<dbReference type="HOGENOM" id="CLU_048023_1_1_1"/>
<dbReference type="InParanoid" id="P34356"/>
<dbReference type="OrthoDB" id="418595at2759"/>
<dbReference type="PhylomeDB" id="P34356"/>
<dbReference type="PRO" id="PR:P34356"/>
<dbReference type="Proteomes" id="UP000001940">
    <property type="component" value="Chromosome III"/>
</dbReference>
<dbReference type="Bgee" id="WBGene00004401">
    <property type="expression patterns" value="Expressed in pharyngeal muscle cell (C elegans) and 3 other cell types or tissues"/>
</dbReference>
<dbReference type="GO" id="GO:0016020">
    <property type="term" value="C:membrane"/>
    <property type="evidence" value="ECO:0007669"/>
    <property type="project" value="UniProtKB-SubCell"/>
</dbReference>
<dbReference type="GO" id="GO:0005509">
    <property type="term" value="F:calcium ion binding"/>
    <property type="evidence" value="ECO:0007669"/>
    <property type="project" value="InterPro"/>
</dbReference>
<dbReference type="GO" id="GO:0004252">
    <property type="term" value="F:serine-type endopeptidase activity"/>
    <property type="evidence" value="ECO:0000318"/>
    <property type="project" value="GO_Central"/>
</dbReference>
<dbReference type="Gene3D" id="1.10.238.10">
    <property type="entry name" value="EF-hand"/>
    <property type="match status" value="1"/>
</dbReference>
<dbReference type="Gene3D" id="1.20.1540.10">
    <property type="entry name" value="Rhomboid-like"/>
    <property type="match status" value="1"/>
</dbReference>
<dbReference type="InterPro" id="IPR011992">
    <property type="entry name" value="EF-hand-dom_pair"/>
</dbReference>
<dbReference type="InterPro" id="IPR018247">
    <property type="entry name" value="EF_Hand_1_Ca_BS"/>
</dbReference>
<dbReference type="InterPro" id="IPR002048">
    <property type="entry name" value="EF_hand_dom"/>
</dbReference>
<dbReference type="InterPro" id="IPR022764">
    <property type="entry name" value="Peptidase_S54_rhomboid_dom"/>
</dbReference>
<dbReference type="InterPro" id="IPR017213">
    <property type="entry name" value="Peptidase_S54_rhomboid_met"/>
</dbReference>
<dbReference type="InterPro" id="IPR035952">
    <property type="entry name" value="Rhomboid-like_sf"/>
</dbReference>
<dbReference type="InterPro" id="IPR051739">
    <property type="entry name" value="Rhomboid_IM_Serine_Proteases"/>
</dbReference>
<dbReference type="PANTHER" id="PTHR45840:SF9">
    <property type="entry name" value="INACTIVE RHOMBOID-RELATED PROTEIN 2"/>
    <property type="match status" value="1"/>
</dbReference>
<dbReference type="PANTHER" id="PTHR45840">
    <property type="entry name" value="RHOMBOID-RELATED PROTEIN"/>
    <property type="match status" value="1"/>
</dbReference>
<dbReference type="Pfam" id="PF01694">
    <property type="entry name" value="Rhomboid"/>
    <property type="match status" value="1"/>
</dbReference>
<dbReference type="PIRSF" id="PIRSF037470">
    <property type="entry name" value="Rhomboid"/>
    <property type="match status" value="1"/>
</dbReference>
<dbReference type="SUPFAM" id="SSF47473">
    <property type="entry name" value="EF-hand"/>
    <property type="match status" value="1"/>
</dbReference>
<dbReference type="SUPFAM" id="SSF144091">
    <property type="entry name" value="Rhomboid-like"/>
    <property type="match status" value="1"/>
</dbReference>
<dbReference type="PROSITE" id="PS00018">
    <property type="entry name" value="EF_HAND_1"/>
    <property type="match status" value="1"/>
</dbReference>
<dbReference type="PROSITE" id="PS50222">
    <property type="entry name" value="EF_HAND_2"/>
    <property type="match status" value="1"/>
</dbReference>
<accession>P34356</accession>
<keyword id="KW-0106">Calcium</keyword>
<keyword id="KW-0472">Membrane</keyword>
<keyword id="KW-0479">Metal-binding</keyword>
<keyword id="KW-1185">Reference proteome</keyword>
<keyword id="KW-0812">Transmembrane</keyword>
<keyword id="KW-1133">Transmembrane helix</keyword>
<reference key="1">
    <citation type="journal article" date="1994" name="Nature">
        <title>2.2 Mb of contiguous nucleotide sequence from chromosome III of C. elegans.</title>
        <authorList>
            <person name="Wilson R."/>
            <person name="Ainscough R."/>
            <person name="Anderson K."/>
            <person name="Baynes C."/>
            <person name="Berks M."/>
            <person name="Bonfield J."/>
            <person name="Burton J."/>
            <person name="Connell M."/>
            <person name="Copsey T."/>
            <person name="Cooper J."/>
            <person name="Coulson A."/>
            <person name="Craxton M."/>
            <person name="Dear S."/>
            <person name="Du Z."/>
            <person name="Durbin R."/>
            <person name="Favello A."/>
            <person name="Fraser A."/>
            <person name="Fulton L."/>
            <person name="Gardner A."/>
            <person name="Green P."/>
            <person name="Hawkins T."/>
            <person name="Hillier L."/>
            <person name="Jier M."/>
            <person name="Johnston L."/>
            <person name="Jones M."/>
            <person name="Kershaw J."/>
            <person name="Kirsten J."/>
            <person name="Laisster N."/>
            <person name="Latreille P."/>
            <person name="Lightning J."/>
            <person name="Lloyd C."/>
            <person name="Mortimore B."/>
            <person name="O'Callaghan M."/>
            <person name="Parsons J."/>
            <person name="Percy C."/>
            <person name="Rifken L."/>
            <person name="Roopra A."/>
            <person name="Saunders D."/>
            <person name="Shownkeen R."/>
            <person name="Sims M."/>
            <person name="Smaldon N."/>
            <person name="Smith A."/>
            <person name="Smith M."/>
            <person name="Sonnhammer E."/>
            <person name="Staden R."/>
            <person name="Sulston J."/>
            <person name="Thierry-Mieg J."/>
            <person name="Thomas K."/>
            <person name="Vaudin M."/>
            <person name="Vaughan K."/>
            <person name="Waterston R."/>
            <person name="Watson A."/>
            <person name="Weinstock L."/>
            <person name="Wilkinson-Sproat J."/>
            <person name="Wohldman P."/>
        </authorList>
    </citation>
    <scope>NUCLEOTIDE SEQUENCE [LARGE SCALE GENOMIC DNA]</scope>
    <source>
        <strain>Bristol N2</strain>
    </source>
</reference>
<reference key="2">
    <citation type="journal article" date="1998" name="Science">
        <title>Genome sequence of the nematode C. elegans: a platform for investigating biology.</title>
        <authorList>
            <consortium name="The C. elegans sequencing consortium"/>
        </authorList>
    </citation>
    <scope>NUCLEOTIDE SEQUENCE [LARGE SCALE GENOMIC DNA]</scope>
    <source>
        <strain>Bristol N2</strain>
    </source>
</reference>
<reference key="3">
    <citation type="journal article" date="2004" name="PLoS Biol.">
        <title>EGF signal propagation during C. elegans vulval development mediated by ROM-1 rhomboid.</title>
        <authorList>
            <person name="Dutt A."/>
            <person name="Canevascini S."/>
            <person name="Froehli-Hoier E."/>
            <person name="Hajnal A."/>
        </authorList>
    </citation>
    <scope>DISRUPTION PHENOTYPE</scope>
</reference>
<comment type="function">
    <text evidence="4">Probable inactive serine protease.</text>
</comment>
<comment type="subcellular location">
    <subcellularLocation>
        <location evidence="5">Membrane</location>
        <topology evidence="5">Multi-pass membrane protein</topology>
    </subcellularLocation>
</comment>
<comment type="disruption phenotype">
    <text evidence="3">RNAi-mediated knockdown does not affect vulva development. Does not suppress ectopic vulva formation in a let-60 (n1046) gain-of-function mutant background.</text>
</comment>
<comment type="similarity">
    <text evidence="5">Belongs to the peptidase S54 family.</text>
</comment>
<comment type="caution">
    <text evidence="5">Although it belongs to the S54 peptidase family, the active site Ser-235 is replaced by an alanine residue, suggesting that it has no serine peptidase activity.</text>
</comment>
<feature type="chain" id="PRO_0000206181" description="Inactive rhomboid-related protein 2">
    <location>
        <begin position="1"/>
        <end position="348"/>
    </location>
</feature>
<feature type="transmembrane region" description="Helical" evidence="1">
    <location>
        <begin position="121"/>
        <end position="141"/>
    </location>
</feature>
<feature type="transmembrane region" description="Helical" evidence="1">
    <location>
        <begin position="177"/>
        <end position="197"/>
    </location>
</feature>
<feature type="transmembrane region" description="Helical" evidence="1">
    <location>
        <begin position="207"/>
        <end position="227"/>
    </location>
</feature>
<feature type="transmembrane region" description="Helical" evidence="1">
    <location>
        <begin position="229"/>
        <end position="249"/>
    </location>
</feature>
<feature type="transmembrane region" description="Helical" evidence="1">
    <location>
        <begin position="263"/>
        <end position="283"/>
    </location>
</feature>
<feature type="transmembrane region" description="Helical" evidence="1">
    <location>
        <begin position="290"/>
        <end position="310"/>
    </location>
</feature>
<feature type="transmembrane region" description="Helical" evidence="1">
    <location>
        <begin position="323"/>
        <end position="343"/>
    </location>
</feature>
<feature type="domain" description="EF-hand" evidence="2">
    <location>
        <begin position="14"/>
        <end position="49"/>
    </location>
</feature>
<feature type="binding site" evidence="2">
    <location>
        <position position="27"/>
    </location>
    <ligand>
        <name>Ca(2+)</name>
        <dbReference type="ChEBI" id="CHEBI:29108"/>
    </ligand>
</feature>
<feature type="binding site" evidence="2">
    <location>
        <position position="29"/>
    </location>
    <ligand>
        <name>Ca(2+)</name>
        <dbReference type="ChEBI" id="CHEBI:29108"/>
    </ligand>
</feature>
<feature type="binding site" evidence="2">
    <location>
        <position position="31"/>
    </location>
    <ligand>
        <name>Ca(2+)</name>
        <dbReference type="ChEBI" id="CHEBI:29108"/>
    </ligand>
</feature>
<feature type="binding site" evidence="2">
    <location>
        <position position="38"/>
    </location>
    <ligand>
        <name>Ca(2+)</name>
        <dbReference type="ChEBI" id="CHEBI:29108"/>
    </ligand>
</feature>
<evidence type="ECO:0000255" key="1"/>
<evidence type="ECO:0000255" key="2">
    <source>
        <dbReference type="PROSITE-ProRule" id="PRU00448"/>
    </source>
</evidence>
<evidence type="ECO:0000269" key="3">
    <source>
    </source>
</evidence>
<evidence type="ECO:0000303" key="4">
    <source>
    </source>
</evidence>
<evidence type="ECO:0000305" key="5"/>
<evidence type="ECO:0000312" key="6">
    <source>
        <dbReference type="WormBase" id="C48B4.2"/>
    </source>
</evidence>
<gene>
    <name evidence="4 6" type="primary">rom-2</name>
    <name evidence="6" type="ORF">C48B4.2</name>
</gene>
<sequence>MDDKWRESAPVNDIEASSWIRIFRAFDTDHDGLIQCEEMQKTIRDSTYSFGFDHYELQKMSLYLEMREGKPVDFADFCYLMSKCKGYRLREYLFRAALTVTPKNQRIHVFSELQRYKCVPPPIFLIFLSIVQLAFYLYYVVDSSEGVWLSGPIPTMSPLIVSQYHLPELWRLFTYCLINVGIFHIIFNILIQLAIGVPLELVHRWRIYILYFMGVLFGSILSLALDPTVFLCGGAAGSFSLIASHITTIATNFKEMENATCRLPILIVFAALDYVLAVYQRFFAPRIDKVSMYGHLGGLVAGILFTFILFRGSKPSRFYTVSFWVSLVLSGFFIAICITLIAAPSMLH</sequence>